<reference key="1">
    <citation type="submission" date="2005-05" db="EMBL/GenBank/DDBJ databases">
        <authorList>
            <consortium name="NIH - Zebrafish Gene Collection (ZGC) project"/>
        </authorList>
    </citation>
    <scope>NUCLEOTIDE SEQUENCE [LARGE SCALE MRNA]</scope>
    <source>
        <tissue>Brain</tissue>
    </source>
</reference>
<gene>
    <name type="ORF">zgc:110130</name>
</gene>
<proteinExistence type="evidence at transcript level"/>
<accession>Q503U3</accession>
<comment type="function">
    <text evidence="1">Plays a role in mitochondrial and peroxisomal fission. Promotes the recruitment and association of the fission mediator dynamin-related protein 1 (DNM1L) to the mitochondrial surface (By similarity).</text>
</comment>
<comment type="subcellular location">
    <subcellularLocation>
        <location evidence="1">Mitochondrion outer membrane</location>
        <topology evidence="1">Single-pass type IV membrane protein</topology>
    </subcellularLocation>
    <subcellularLocation>
        <location evidence="1">Peroxisome</location>
    </subcellularLocation>
</comment>
<comment type="similarity">
    <text evidence="4">Belongs to the Tango11 family.</text>
</comment>
<sequence length="275" mass="31360">MAEVNRIHYELEYTEGISQQMRIPERLKIASGSSEEPPGLLNASHSTMMLVPERIVIAGDDNDARFGRPRDLDLIQSTPLETVELKTPPRVLTLNDQPLDFLEPEPAANSTAQPREEMKSHFRSRREQCRSENSTMRRNGQINKHDFASPSPSRAPVRVCPPLISPEDSQNLNSASGVLNYIKSTTRRAYQQVLEVLDDSQRGRASLVTFDASVENTPDDAGLTDAASLRRQIIKLNRRLQLLEHENKERAKREMVMYSLTVAFWLVNSWIWLRR</sequence>
<protein>
    <recommendedName>
        <fullName>Mitochondrial fission factor homolog A</fullName>
    </recommendedName>
</protein>
<organism>
    <name type="scientific">Danio rerio</name>
    <name type="common">Zebrafish</name>
    <name type="synonym">Brachydanio rerio</name>
    <dbReference type="NCBI Taxonomy" id="7955"/>
    <lineage>
        <taxon>Eukaryota</taxon>
        <taxon>Metazoa</taxon>
        <taxon>Chordata</taxon>
        <taxon>Craniata</taxon>
        <taxon>Vertebrata</taxon>
        <taxon>Euteleostomi</taxon>
        <taxon>Actinopterygii</taxon>
        <taxon>Neopterygii</taxon>
        <taxon>Teleostei</taxon>
        <taxon>Ostariophysi</taxon>
        <taxon>Cypriniformes</taxon>
        <taxon>Danionidae</taxon>
        <taxon>Danioninae</taxon>
        <taxon>Danio</taxon>
    </lineage>
</organism>
<name>MFFA_DANRE</name>
<feature type="chain" id="PRO_0000289188" description="Mitochondrial fission factor homolog A">
    <location>
        <begin position="1"/>
        <end position="275"/>
    </location>
</feature>
<feature type="topological domain" description="Cytoplasmic" evidence="2">
    <location>
        <begin position="1"/>
        <end position="255"/>
    </location>
</feature>
<feature type="transmembrane region" description="Helical; Anchor for type IV membrane protein" evidence="2">
    <location>
        <begin position="256"/>
        <end position="273"/>
    </location>
</feature>
<feature type="topological domain" description="Extracellular" evidence="2">
    <location>
        <begin position="274"/>
        <end position="275"/>
    </location>
</feature>
<feature type="region of interest" description="Disordered" evidence="3">
    <location>
        <begin position="100"/>
        <end position="171"/>
    </location>
</feature>
<feature type="coiled-coil region" evidence="2">
    <location>
        <begin position="223"/>
        <end position="253"/>
    </location>
</feature>
<feature type="compositionally biased region" description="Basic and acidic residues" evidence="3">
    <location>
        <begin position="114"/>
        <end position="130"/>
    </location>
</feature>
<feature type="compositionally biased region" description="Polar residues" evidence="3">
    <location>
        <begin position="131"/>
        <end position="142"/>
    </location>
</feature>
<evidence type="ECO:0000250" key="1"/>
<evidence type="ECO:0000255" key="2"/>
<evidence type="ECO:0000256" key="3">
    <source>
        <dbReference type="SAM" id="MobiDB-lite"/>
    </source>
</evidence>
<evidence type="ECO:0000305" key="4"/>
<dbReference type="EMBL" id="BC095179">
    <property type="protein sequence ID" value="AAH95179.1"/>
    <property type="molecule type" value="mRNA"/>
</dbReference>
<dbReference type="RefSeq" id="NP_001018402.2">
    <property type="nucleotide sequence ID" value="NM_001020566.2"/>
</dbReference>
<dbReference type="SMR" id="Q503U3"/>
<dbReference type="FunCoup" id="Q503U3">
    <property type="interactions" value="1821"/>
</dbReference>
<dbReference type="STRING" id="7955.ENSDARP00000120140"/>
<dbReference type="PaxDb" id="7955-ENSDARP00000120140"/>
<dbReference type="PeptideAtlas" id="Q503U3"/>
<dbReference type="GeneID" id="553588"/>
<dbReference type="KEGG" id="dre:553588"/>
<dbReference type="AGR" id="ZFIN:ZDB-GENE-050522-208"/>
<dbReference type="CTD" id="553588"/>
<dbReference type="ZFIN" id="ZDB-GENE-050522-208">
    <property type="gene designation" value="mffb"/>
</dbReference>
<dbReference type="eggNOG" id="ENOG502R96B">
    <property type="taxonomic scope" value="Eukaryota"/>
</dbReference>
<dbReference type="InParanoid" id="Q503U3"/>
<dbReference type="OrthoDB" id="5986838at2759"/>
<dbReference type="PhylomeDB" id="Q503U3"/>
<dbReference type="PRO" id="PR:Q503U3"/>
<dbReference type="Proteomes" id="UP000000437">
    <property type="component" value="Chromosome 2"/>
</dbReference>
<dbReference type="GO" id="GO:0005741">
    <property type="term" value="C:mitochondrial outer membrane"/>
    <property type="evidence" value="ECO:0000318"/>
    <property type="project" value="GO_Central"/>
</dbReference>
<dbReference type="GO" id="GO:0005777">
    <property type="term" value="C:peroxisome"/>
    <property type="evidence" value="ECO:0000250"/>
    <property type="project" value="UniProtKB"/>
</dbReference>
<dbReference type="GO" id="GO:0042803">
    <property type="term" value="F:protein homodimerization activity"/>
    <property type="evidence" value="ECO:0000250"/>
    <property type="project" value="UniProtKB"/>
</dbReference>
<dbReference type="GO" id="GO:0000266">
    <property type="term" value="P:mitochondrial fission"/>
    <property type="evidence" value="ECO:0000250"/>
    <property type="project" value="UniProtKB"/>
</dbReference>
<dbReference type="GO" id="GO:0090141">
    <property type="term" value="P:positive regulation of mitochondrial fission"/>
    <property type="evidence" value="ECO:0000318"/>
    <property type="project" value="GO_Central"/>
</dbReference>
<dbReference type="GO" id="GO:0006626">
    <property type="term" value="P:protein targeting to mitochondrion"/>
    <property type="evidence" value="ECO:0000250"/>
    <property type="project" value="UniProtKB"/>
</dbReference>
<dbReference type="InterPro" id="IPR039433">
    <property type="entry name" value="Mff-like_dom"/>
</dbReference>
<dbReference type="InterPro" id="IPR008518">
    <property type="entry name" value="Mff/Tango-11"/>
</dbReference>
<dbReference type="PANTHER" id="PTHR16501:SF17">
    <property type="entry name" value="MITOCHONDRIAL FISSION FACTOR"/>
    <property type="match status" value="1"/>
</dbReference>
<dbReference type="PANTHER" id="PTHR16501">
    <property type="entry name" value="TRANSPORT AND GOLGI ORGANIZATION PROTEIN 11"/>
    <property type="match status" value="1"/>
</dbReference>
<dbReference type="Pfam" id="PF05644">
    <property type="entry name" value="Miff"/>
    <property type="match status" value="1"/>
</dbReference>
<keyword id="KW-0175">Coiled coil</keyword>
<keyword id="KW-0472">Membrane</keyword>
<keyword id="KW-0496">Mitochondrion</keyword>
<keyword id="KW-1000">Mitochondrion outer membrane</keyword>
<keyword id="KW-0576">Peroxisome</keyword>
<keyword id="KW-1185">Reference proteome</keyword>
<keyword id="KW-0812">Transmembrane</keyword>
<keyword id="KW-1133">Transmembrane helix</keyword>